<evidence type="ECO:0000250" key="1"/>
<evidence type="ECO:0000255" key="2"/>
<evidence type="ECO:0000305" key="3"/>
<dbReference type="EMBL" id="X79065">
    <property type="protein sequence ID" value="CAA55669.1"/>
    <property type="molecule type" value="mRNA"/>
</dbReference>
<dbReference type="PIR" id="S52115">
    <property type="entry name" value="S52115"/>
</dbReference>
<dbReference type="RefSeq" id="NP_001105461.1">
    <property type="nucleotide sequence ID" value="NM_001111991.1"/>
</dbReference>
<dbReference type="SMR" id="Q43266"/>
<dbReference type="BioGRID" id="951642">
    <property type="interactions" value="1"/>
</dbReference>
<dbReference type="FunCoup" id="Q43266">
    <property type="interactions" value="3302"/>
</dbReference>
<dbReference type="STRING" id="4577.Q43266"/>
<dbReference type="PaxDb" id="4577-GRMZM2G030523_P01"/>
<dbReference type="EnsemblPlants" id="Zm00001eb258230_T001">
    <property type="protein sequence ID" value="Zm00001eb258230_P001"/>
    <property type="gene ID" value="Zm00001eb258230"/>
</dbReference>
<dbReference type="GeneID" id="542425"/>
<dbReference type="Gramene" id="Zm00001eb258230_T001">
    <property type="protein sequence ID" value="Zm00001eb258230_P001"/>
    <property type="gene ID" value="Zm00001eb258230"/>
</dbReference>
<dbReference type="KEGG" id="zma:542425"/>
<dbReference type="MaizeGDB" id="113516"/>
<dbReference type="eggNOG" id="KOG1636">
    <property type="taxonomic scope" value="Eukaryota"/>
</dbReference>
<dbReference type="HOGENOM" id="CLU_043978_3_0_1"/>
<dbReference type="InParanoid" id="Q43266"/>
<dbReference type="OMA" id="EMKLINM"/>
<dbReference type="OrthoDB" id="534348at2759"/>
<dbReference type="Proteomes" id="UP000007305">
    <property type="component" value="Chromosome 5"/>
</dbReference>
<dbReference type="ExpressionAtlas" id="Q43266">
    <property type="expression patterns" value="baseline and differential"/>
</dbReference>
<dbReference type="GO" id="GO:0043626">
    <property type="term" value="C:PCNA complex"/>
    <property type="evidence" value="ECO:0000318"/>
    <property type="project" value="GO_Central"/>
</dbReference>
<dbReference type="GO" id="GO:0003677">
    <property type="term" value="F:DNA binding"/>
    <property type="evidence" value="ECO:0007669"/>
    <property type="project" value="UniProtKB-KW"/>
</dbReference>
<dbReference type="GO" id="GO:0030337">
    <property type="term" value="F:DNA polymerase processivity factor activity"/>
    <property type="evidence" value="ECO:0000318"/>
    <property type="project" value="GO_Central"/>
</dbReference>
<dbReference type="GO" id="GO:0006272">
    <property type="term" value="P:leading strand elongation"/>
    <property type="evidence" value="ECO:0000318"/>
    <property type="project" value="GO_Central"/>
</dbReference>
<dbReference type="GO" id="GO:0006298">
    <property type="term" value="P:mismatch repair"/>
    <property type="evidence" value="ECO:0000318"/>
    <property type="project" value="GO_Central"/>
</dbReference>
<dbReference type="GO" id="GO:0006275">
    <property type="term" value="P:regulation of DNA replication"/>
    <property type="evidence" value="ECO:0007669"/>
    <property type="project" value="InterPro"/>
</dbReference>
<dbReference type="GO" id="GO:0019985">
    <property type="term" value="P:translesion synthesis"/>
    <property type="evidence" value="ECO:0000318"/>
    <property type="project" value="GO_Central"/>
</dbReference>
<dbReference type="CDD" id="cd00577">
    <property type="entry name" value="PCNA"/>
    <property type="match status" value="1"/>
</dbReference>
<dbReference type="FunFam" id="3.70.10.10:FF:000001">
    <property type="entry name" value="Proliferating cell nuclear antigen"/>
    <property type="match status" value="1"/>
</dbReference>
<dbReference type="Gene3D" id="3.70.10.10">
    <property type="match status" value="1"/>
</dbReference>
<dbReference type="HAMAP" id="MF_00317">
    <property type="entry name" value="DNApol_clamp_arch"/>
    <property type="match status" value="1"/>
</dbReference>
<dbReference type="InterPro" id="IPR046938">
    <property type="entry name" value="DNA_clamp_sf"/>
</dbReference>
<dbReference type="InterPro" id="IPR000730">
    <property type="entry name" value="Pr_cel_nuc_antig"/>
</dbReference>
<dbReference type="InterPro" id="IPR022649">
    <property type="entry name" value="Pr_cel_nuc_antig_C"/>
</dbReference>
<dbReference type="InterPro" id="IPR022659">
    <property type="entry name" value="Pr_cel_nuc_antig_CS"/>
</dbReference>
<dbReference type="InterPro" id="IPR022648">
    <property type="entry name" value="Pr_cel_nuc_antig_N"/>
</dbReference>
<dbReference type="NCBIfam" id="TIGR00590">
    <property type="entry name" value="pcna"/>
    <property type="match status" value="1"/>
</dbReference>
<dbReference type="PANTHER" id="PTHR11352">
    <property type="entry name" value="PROLIFERATING CELL NUCLEAR ANTIGEN"/>
    <property type="match status" value="1"/>
</dbReference>
<dbReference type="PANTHER" id="PTHR11352:SF0">
    <property type="entry name" value="PROLIFERATING CELL NUCLEAR ANTIGEN"/>
    <property type="match status" value="1"/>
</dbReference>
<dbReference type="Pfam" id="PF02747">
    <property type="entry name" value="PCNA_C"/>
    <property type="match status" value="1"/>
</dbReference>
<dbReference type="Pfam" id="PF00705">
    <property type="entry name" value="PCNA_N"/>
    <property type="match status" value="1"/>
</dbReference>
<dbReference type="PRINTS" id="PR00339">
    <property type="entry name" value="PCNACYCLIN"/>
</dbReference>
<dbReference type="SUPFAM" id="SSF55979">
    <property type="entry name" value="DNA clamp"/>
    <property type="match status" value="2"/>
</dbReference>
<dbReference type="PROSITE" id="PS01251">
    <property type="entry name" value="PCNA_1"/>
    <property type="match status" value="1"/>
</dbReference>
<dbReference type="PROSITE" id="PS00293">
    <property type="entry name" value="PCNA_2"/>
    <property type="match status" value="1"/>
</dbReference>
<accession>Q43266</accession>
<keyword id="KW-0235">DNA replication</keyword>
<keyword id="KW-0238">DNA-binding</keyword>
<keyword id="KW-0539">Nucleus</keyword>
<keyword id="KW-1185">Reference proteome</keyword>
<gene>
    <name type="primary">PCNA</name>
</gene>
<organism>
    <name type="scientific">Zea mays</name>
    <name type="common">Maize</name>
    <dbReference type="NCBI Taxonomy" id="4577"/>
    <lineage>
        <taxon>Eukaryota</taxon>
        <taxon>Viridiplantae</taxon>
        <taxon>Streptophyta</taxon>
        <taxon>Embryophyta</taxon>
        <taxon>Tracheophyta</taxon>
        <taxon>Spermatophyta</taxon>
        <taxon>Magnoliopsida</taxon>
        <taxon>Liliopsida</taxon>
        <taxon>Poales</taxon>
        <taxon>Poaceae</taxon>
        <taxon>PACMAD clade</taxon>
        <taxon>Panicoideae</taxon>
        <taxon>Andropogonodae</taxon>
        <taxon>Andropogoneae</taxon>
        <taxon>Tripsacinae</taxon>
        <taxon>Zea</taxon>
    </lineage>
</organism>
<protein>
    <recommendedName>
        <fullName>Proliferating cell nuclear antigen</fullName>
        <shortName>PCNA</shortName>
    </recommendedName>
</protein>
<name>PCNA_MAIZE</name>
<comment type="function">
    <text evidence="1">This protein is an auxiliary protein of DNA polymerase delta and is involved in the control of eukaryotic DNA replication by increasing the polymerase's processibility during elongation of the leading strand.</text>
</comment>
<comment type="subcellular location">
    <subcellularLocation>
        <location>Nucleus</location>
    </subcellularLocation>
</comment>
<comment type="similarity">
    <text evidence="3">Belongs to the PCNA family.</text>
</comment>
<feature type="chain" id="PRO_0000149183" description="Proliferating cell nuclear antigen">
    <location>
        <begin position="1"/>
        <end position="263"/>
    </location>
</feature>
<feature type="DNA-binding region" evidence="2">
    <location>
        <begin position="61"/>
        <end position="80"/>
    </location>
</feature>
<reference key="1">
    <citation type="journal article" date="1995" name="Biochim. Biophys. Acta">
        <title>Molecular cloning of a maize cDNA clone encoding a putative proliferating cell nuclear antigen.</title>
        <authorList>
            <person name="Lopez I."/>
            <person name="Khan S."/>
            <person name="Vasquez-Ramos J."/>
            <person name="Hussey P.J."/>
        </authorList>
    </citation>
    <scope>NUCLEOTIDE SEQUENCE [MRNA]</scope>
    <source>
        <strain>cv. Black Mexican Sweet</strain>
    </source>
</reference>
<sequence>MLELRLVQGSLLKKVLEAIRELVNDANFDCSGTGFSLQAMDSSHVALVALLLRAEGFEHYRCDRNLSMGMNLNNMAKMLRCAGNDDIITIKADDGSDTVTFMFESPKQDKIADFEMKLMDIDSEHLGIPDSEYQAIVRMPSSEFMRICKDLSSIGDTVVISVTKEGVKFSTSGEIGSANIVCRQNQTIDKPEEATIIEMQEPVSLTFALRYMNSFTKASSLSEQVTISLSSELPVVVEYKIAEMGYIRFYLAPKIEDDEEMKP</sequence>
<proteinExistence type="evidence at transcript level"/>